<gene>
    <name evidence="1" type="primary">rpl11</name>
    <name type="ordered locus">Maeo_1009</name>
</gene>
<proteinExistence type="inferred from homology"/>
<evidence type="ECO:0000255" key="1">
    <source>
        <dbReference type="HAMAP-Rule" id="MF_00736"/>
    </source>
</evidence>
<evidence type="ECO:0000305" key="2"/>
<comment type="function">
    <text evidence="1">Forms part of the ribosomal stalk which helps the ribosome interact with GTP-bound translation factors.</text>
</comment>
<comment type="subunit">
    <text evidence="1">Part of the ribosomal stalk of the 50S ribosomal subunit. Interacts with L10 and the large rRNA to form the base of the stalk. L10 forms an elongated spine to which L12 dimers bind in a sequential fashion forming a multimeric L10(L12)X complex.</text>
</comment>
<comment type="similarity">
    <text evidence="1">Belongs to the universal ribosomal protein uL11 family.</text>
</comment>
<name>RL11_META3</name>
<accession>A6UVR5</accession>
<keyword id="KW-0687">Ribonucleoprotein</keyword>
<keyword id="KW-0689">Ribosomal protein</keyword>
<keyword id="KW-0694">RNA-binding</keyword>
<keyword id="KW-0699">rRNA-binding</keyword>
<organism>
    <name type="scientific">Methanococcus aeolicus (strain ATCC BAA-1280 / DSM 17508 / OCM 812 / Nankai-3)</name>
    <dbReference type="NCBI Taxonomy" id="419665"/>
    <lineage>
        <taxon>Archaea</taxon>
        <taxon>Methanobacteriati</taxon>
        <taxon>Methanobacteriota</taxon>
        <taxon>Methanomada group</taxon>
        <taxon>Methanococci</taxon>
        <taxon>Methanococcales</taxon>
        <taxon>Methanococcaceae</taxon>
        <taxon>Methanococcus</taxon>
    </lineage>
</organism>
<dbReference type="EMBL" id="CP000743">
    <property type="protein sequence ID" value="ABR56587.1"/>
    <property type="molecule type" value="Genomic_DNA"/>
</dbReference>
<dbReference type="RefSeq" id="WP_011973719.1">
    <property type="nucleotide sequence ID" value="NC_009635.1"/>
</dbReference>
<dbReference type="SMR" id="A6UVR5"/>
<dbReference type="STRING" id="419665.Maeo_1009"/>
<dbReference type="GeneID" id="5326527"/>
<dbReference type="KEGG" id="mae:Maeo_1009"/>
<dbReference type="eggNOG" id="arCOG04372">
    <property type="taxonomic scope" value="Archaea"/>
</dbReference>
<dbReference type="HOGENOM" id="CLU_074237_4_0_2"/>
<dbReference type="OrthoDB" id="8842at2157"/>
<dbReference type="Proteomes" id="UP000001106">
    <property type="component" value="Chromosome"/>
</dbReference>
<dbReference type="GO" id="GO:0015934">
    <property type="term" value="C:large ribosomal subunit"/>
    <property type="evidence" value="ECO:0007669"/>
    <property type="project" value="TreeGrafter"/>
</dbReference>
<dbReference type="GO" id="GO:0070180">
    <property type="term" value="F:large ribosomal subunit rRNA binding"/>
    <property type="evidence" value="ECO:0007669"/>
    <property type="project" value="UniProtKB-UniRule"/>
</dbReference>
<dbReference type="GO" id="GO:0003735">
    <property type="term" value="F:structural constituent of ribosome"/>
    <property type="evidence" value="ECO:0007669"/>
    <property type="project" value="InterPro"/>
</dbReference>
<dbReference type="GO" id="GO:0006412">
    <property type="term" value="P:translation"/>
    <property type="evidence" value="ECO:0007669"/>
    <property type="project" value="UniProtKB-UniRule"/>
</dbReference>
<dbReference type="CDD" id="cd00349">
    <property type="entry name" value="Ribosomal_L11"/>
    <property type="match status" value="1"/>
</dbReference>
<dbReference type="FunFam" id="3.30.1550.10:FF:000007">
    <property type="entry name" value="50S ribosomal protein L11"/>
    <property type="match status" value="1"/>
</dbReference>
<dbReference type="Gene3D" id="1.10.10.250">
    <property type="entry name" value="Ribosomal protein L11, C-terminal domain"/>
    <property type="match status" value="1"/>
</dbReference>
<dbReference type="Gene3D" id="3.30.1550.10">
    <property type="entry name" value="Ribosomal protein L11/L12, N-terminal domain"/>
    <property type="match status" value="1"/>
</dbReference>
<dbReference type="HAMAP" id="MF_00736">
    <property type="entry name" value="Ribosomal_uL11"/>
    <property type="match status" value="1"/>
</dbReference>
<dbReference type="InterPro" id="IPR000911">
    <property type="entry name" value="Ribosomal_uL11"/>
</dbReference>
<dbReference type="InterPro" id="IPR020783">
    <property type="entry name" value="Ribosomal_uL11_C"/>
</dbReference>
<dbReference type="InterPro" id="IPR036769">
    <property type="entry name" value="Ribosomal_uL11_C_sf"/>
</dbReference>
<dbReference type="InterPro" id="IPR020784">
    <property type="entry name" value="Ribosomal_uL11_N"/>
</dbReference>
<dbReference type="InterPro" id="IPR036796">
    <property type="entry name" value="Ribosomal_uL11_N_sf"/>
</dbReference>
<dbReference type="NCBIfam" id="NF002232">
    <property type="entry name" value="PRK01143.1"/>
    <property type="match status" value="1"/>
</dbReference>
<dbReference type="PANTHER" id="PTHR11661">
    <property type="entry name" value="60S RIBOSOMAL PROTEIN L12"/>
    <property type="match status" value="1"/>
</dbReference>
<dbReference type="PANTHER" id="PTHR11661:SF1">
    <property type="entry name" value="LARGE RIBOSOMAL SUBUNIT PROTEIN UL11M"/>
    <property type="match status" value="1"/>
</dbReference>
<dbReference type="Pfam" id="PF00298">
    <property type="entry name" value="Ribosomal_L11"/>
    <property type="match status" value="1"/>
</dbReference>
<dbReference type="Pfam" id="PF03946">
    <property type="entry name" value="Ribosomal_L11_N"/>
    <property type="match status" value="1"/>
</dbReference>
<dbReference type="SMART" id="SM00649">
    <property type="entry name" value="RL11"/>
    <property type="match status" value="1"/>
</dbReference>
<dbReference type="SUPFAM" id="SSF54747">
    <property type="entry name" value="Ribosomal L11/L12e N-terminal domain"/>
    <property type="match status" value="1"/>
</dbReference>
<dbReference type="SUPFAM" id="SSF46906">
    <property type="entry name" value="Ribosomal protein L11, C-terminal domain"/>
    <property type="match status" value="1"/>
</dbReference>
<reference key="1">
    <citation type="submission" date="2007-06" db="EMBL/GenBank/DDBJ databases">
        <title>Complete sequence of Methanococcus aeolicus Nankai-3.</title>
        <authorList>
            <consortium name="US DOE Joint Genome Institute"/>
            <person name="Copeland A."/>
            <person name="Lucas S."/>
            <person name="Lapidus A."/>
            <person name="Barry K."/>
            <person name="Glavina del Rio T."/>
            <person name="Dalin E."/>
            <person name="Tice H."/>
            <person name="Pitluck S."/>
            <person name="Chain P."/>
            <person name="Malfatti S."/>
            <person name="Shin M."/>
            <person name="Vergez L."/>
            <person name="Schmutz J."/>
            <person name="Larimer F."/>
            <person name="Land M."/>
            <person name="Hauser L."/>
            <person name="Kyrpides N."/>
            <person name="Lykidis A."/>
            <person name="Sieprawska-Lupa M."/>
            <person name="Whitman W.B."/>
            <person name="Richardson P."/>
        </authorList>
    </citation>
    <scope>NUCLEOTIDE SEQUENCE [LARGE SCALE GENOMIC DNA]</scope>
    <source>
        <strain>ATCC BAA-1280 / DSM 17508 / OCM 812 / Nankai-3</strain>
    </source>
</reference>
<sequence>MATEVVDVLVTGGKATAGPPLGPAVGPLGINIMNVVKEINEKTKDYAGMSVPVKVIVNTDDRSFEIEVGIPPTSALIKTELGLDKGSTEPKAIVAGNLSMEQAVKIAKMKKDSMLSFTLKNATKEVIGTCVSTGINVEGMSPRDAQKAIDAGEFDEYFNE</sequence>
<protein>
    <recommendedName>
        <fullName evidence="1">Large ribosomal subunit protein uL11</fullName>
    </recommendedName>
    <alternativeName>
        <fullName evidence="2">50S ribosomal protein L11</fullName>
    </alternativeName>
</protein>
<feature type="chain" id="PRO_1000046209" description="Large ribosomal subunit protein uL11">
    <location>
        <begin position="1"/>
        <end position="160"/>
    </location>
</feature>